<comment type="function">
    <text evidence="1">One of the primary rRNA binding proteins, it binds directly to 16S rRNA central domain where it helps coordinate assembly of the platform of the 30S subunit.</text>
</comment>
<comment type="subunit">
    <text evidence="1">Part of the 30S ribosomal subunit.</text>
</comment>
<comment type="similarity">
    <text evidence="1">Belongs to the universal ribosomal protein uS8 family.</text>
</comment>
<gene>
    <name evidence="1" type="primary">rps8</name>
    <name type="ordered locus">Memar_0579</name>
</gene>
<evidence type="ECO:0000255" key="1">
    <source>
        <dbReference type="HAMAP-Rule" id="MF_01302"/>
    </source>
</evidence>
<evidence type="ECO:0000305" key="2"/>
<organism>
    <name type="scientific">Methanoculleus marisnigri (strain ATCC 35101 / DSM 1498 / JR1)</name>
    <dbReference type="NCBI Taxonomy" id="368407"/>
    <lineage>
        <taxon>Archaea</taxon>
        <taxon>Methanobacteriati</taxon>
        <taxon>Methanobacteriota</taxon>
        <taxon>Stenosarchaea group</taxon>
        <taxon>Methanomicrobia</taxon>
        <taxon>Methanomicrobiales</taxon>
        <taxon>Methanomicrobiaceae</taxon>
        <taxon>Methanoculleus</taxon>
    </lineage>
</organism>
<feature type="chain" id="PRO_0000290968" description="Small ribosomal subunit protein uS8">
    <location>
        <begin position="1"/>
        <end position="130"/>
    </location>
</feature>
<keyword id="KW-0687">Ribonucleoprotein</keyword>
<keyword id="KW-0689">Ribosomal protein</keyword>
<keyword id="KW-0694">RNA-binding</keyword>
<keyword id="KW-0699">rRNA-binding</keyword>
<name>RS8_METMJ</name>
<protein>
    <recommendedName>
        <fullName evidence="1">Small ribosomal subunit protein uS8</fullName>
    </recommendedName>
    <alternativeName>
        <fullName evidence="2">30S ribosomal protein S8</fullName>
    </alternativeName>
</protein>
<proteinExistence type="inferred from homology"/>
<sequence length="130" mass="13930">MARLNPIADAMSTIKNAGDAGKGEVIVEPASKLLGAMLRVMQENGFISGFEFIDDGRGGQFRVQLSGTINKCGAISPRFPVAMADMEYWESQYLPAKNFGILIVSTSKGVISHAEARNEGIGGQLLGYVY</sequence>
<reference key="1">
    <citation type="journal article" date="2009" name="Stand. Genomic Sci.">
        <title>Complete genome sequence of Methanoculleus marisnigri Romesser et al. 1981 type strain JR1.</title>
        <authorList>
            <person name="Anderson I.J."/>
            <person name="Sieprawska-Lupa M."/>
            <person name="Lapidus A."/>
            <person name="Nolan M."/>
            <person name="Copeland A."/>
            <person name="Glavina Del Rio T."/>
            <person name="Tice H."/>
            <person name="Dalin E."/>
            <person name="Barry K."/>
            <person name="Saunders E."/>
            <person name="Han C."/>
            <person name="Brettin T."/>
            <person name="Detter J.C."/>
            <person name="Bruce D."/>
            <person name="Mikhailova N."/>
            <person name="Pitluck S."/>
            <person name="Hauser L."/>
            <person name="Land M."/>
            <person name="Lucas S."/>
            <person name="Richardson P."/>
            <person name="Whitman W.B."/>
            <person name="Kyrpides N.C."/>
        </authorList>
    </citation>
    <scope>NUCLEOTIDE SEQUENCE [LARGE SCALE GENOMIC DNA]</scope>
    <source>
        <strain>ATCC 35101 / DSM 1498 / JR1</strain>
    </source>
</reference>
<dbReference type="EMBL" id="CP000562">
    <property type="protein sequence ID" value="ABN56512.1"/>
    <property type="molecule type" value="Genomic_DNA"/>
</dbReference>
<dbReference type="RefSeq" id="WP_011843422.1">
    <property type="nucleotide sequence ID" value="NC_009051.1"/>
</dbReference>
<dbReference type="SMR" id="A3CT12"/>
<dbReference type="STRING" id="368407.Memar_0579"/>
<dbReference type="GeneID" id="4846594"/>
<dbReference type="KEGG" id="mem:Memar_0579"/>
<dbReference type="eggNOG" id="arCOG04091">
    <property type="taxonomic scope" value="Archaea"/>
</dbReference>
<dbReference type="HOGENOM" id="CLU_098428_1_1_2"/>
<dbReference type="OrthoDB" id="5670at2157"/>
<dbReference type="Proteomes" id="UP000002146">
    <property type="component" value="Chromosome"/>
</dbReference>
<dbReference type="GO" id="GO:1990904">
    <property type="term" value="C:ribonucleoprotein complex"/>
    <property type="evidence" value="ECO:0007669"/>
    <property type="project" value="UniProtKB-KW"/>
</dbReference>
<dbReference type="GO" id="GO:0005840">
    <property type="term" value="C:ribosome"/>
    <property type="evidence" value="ECO:0007669"/>
    <property type="project" value="UniProtKB-KW"/>
</dbReference>
<dbReference type="GO" id="GO:0019843">
    <property type="term" value="F:rRNA binding"/>
    <property type="evidence" value="ECO:0007669"/>
    <property type="project" value="UniProtKB-UniRule"/>
</dbReference>
<dbReference type="GO" id="GO:0003735">
    <property type="term" value="F:structural constituent of ribosome"/>
    <property type="evidence" value="ECO:0007669"/>
    <property type="project" value="InterPro"/>
</dbReference>
<dbReference type="GO" id="GO:0006412">
    <property type="term" value="P:translation"/>
    <property type="evidence" value="ECO:0007669"/>
    <property type="project" value="UniProtKB-UniRule"/>
</dbReference>
<dbReference type="FunFam" id="3.30.1490.10:FF:000002">
    <property type="entry name" value="40S ribosomal protein S15a"/>
    <property type="match status" value="1"/>
</dbReference>
<dbReference type="Gene3D" id="3.30.1370.30">
    <property type="match status" value="1"/>
</dbReference>
<dbReference type="Gene3D" id="3.30.1490.10">
    <property type="match status" value="1"/>
</dbReference>
<dbReference type="HAMAP" id="MF_01302_A">
    <property type="entry name" value="Ribosomal_uS8_A"/>
    <property type="match status" value="1"/>
</dbReference>
<dbReference type="InterPro" id="IPR000630">
    <property type="entry name" value="Ribosomal_uS8"/>
</dbReference>
<dbReference type="InterPro" id="IPR047863">
    <property type="entry name" value="Ribosomal_uS8_CS"/>
</dbReference>
<dbReference type="InterPro" id="IPR035987">
    <property type="entry name" value="Ribosomal_uS8_sf"/>
</dbReference>
<dbReference type="NCBIfam" id="NF003115">
    <property type="entry name" value="PRK04034.1"/>
    <property type="match status" value="1"/>
</dbReference>
<dbReference type="PANTHER" id="PTHR11758">
    <property type="entry name" value="40S RIBOSOMAL PROTEIN S15A"/>
    <property type="match status" value="1"/>
</dbReference>
<dbReference type="Pfam" id="PF00410">
    <property type="entry name" value="Ribosomal_S8"/>
    <property type="match status" value="1"/>
</dbReference>
<dbReference type="SUPFAM" id="SSF56047">
    <property type="entry name" value="Ribosomal protein S8"/>
    <property type="match status" value="1"/>
</dbReference>
<dbReference type="PROSITE" id="PS00053">
    <property type="entry name" value="RIBOSOMAL_S8"/>
    <property type="match status" value="1"/>
</dbReference>
<accession>A3CT12</accession>